<evidence type="ECO:0000255" key="1">
    <source>
        <dbReference type="HAMAP-Rule" id="MF_00383"/>
    </source>
</evidence>
<evidence type="ECO:0000255" key="2">
    <source>
        <dbReference type="PROSITE-ProRule" id="PRU00469"/>
    </source>
</evidence>
<gene>
    <name evidence="1" type="primary">tfb</name>
    <name type="ordered locus">MmarC5_1639</name>
</gene>
<proteinExistence type="inferred from homology"/>
<dbReference type="EMBL" id="CP000609">
    <property type="protein sequence ID" value="ABO35936.1"/>
    <property type="molecule type" value="Genomic_DNA"/>
</dbReference>
<dbReference type="RefSeq" id="WP_011869383.1">
    <property type="nucleotide sequence ID" value="NC_009135.1"/>
</dbReference>
<dbReference type="SMR" id="A4G0F2"/>
<dbReference type="STRING" id="402880.MmarC5_1639"/>
<dbReference type="GeneID" id="4928835"/>
<dbReference type="KEGG" id="mmq:MmarC5_1639"/>
<dbReference type="eggNOG" id="arCOG01981">
    <property type="taxonomic scope" value="Archaea"/>
</dbReference>
<dbReference type="HOGENOM" id="CLU_043736_0_1_2"/>
<dbReference type="OrthoDB" id="7429at2157"/>
<dbReference type="Proteomes" id="UP000000253">
    <property type="component" value="Chromosome"/>
</dbReference>
<dbReference type="GO" id="GO:0097550">
    <property type="term" value="C:transcription preinitiation complex"/>
    <property type="evidence" value="ECO:0007669"/>
    <property type="project" value="TreeGrafter"/>
</dbReference>
<dbReference type="GO" id="GO:0003700">
    <property type="term" value="F:DNA-binding transcription factor activity"/>
    <property type="evidence" value="ECO:0007669"/>
    <property type="project" value="UniProtKB-UniRule"/>
</dbReference>
<dbReference type="GO" id="GO:0017025">
    <property type="term" value="F:TBP-class protein binding"/>
    <property type="evidence" value="ECO:0007669"/>
    <property type="project" value="InterPro"/>
</dbReference>
<dbReference type="GO" id="GO:0008270">
    <property type="term" value="F:zinc ion binding"/>
    <property type="evidence" value="ECO:0007669"/>
    <property type="project" value="UniProtKB-UniRule"/>
</dbReference>
<dbReference type="GO" id="GO:0070897">
    <property type="term" value="P:transcription preinitiation complex assembly"/>
    <property type="evidence" value="ECO:0007669"/>
    <property type="project" value="InterPro"/>
</dbReference>
<dbReference type="CDD" id="cd20549">
    <property type="entry name" value="CYCLIN_TFIIB_archaea_like_rpt1"/>
    <property type="match status" value="1"/>
</dbReference>
<dbReference type="CDD" id="cd20550">
    <property type="entry name" value="CYCLIN_TFIIB_archaea_like_rpt2"/>
    <property type="match status" value="1"/>
</dbReference>
<dbReference type="FunFam" id="1.10.472.10:FF:000023">
    <property type="entry name" value="Transcription initiation factor IIB"/>
    <property type="match status" value="1"/>
</dbReference>
<dbReference type="FunFam" id="1.10.472.170:FF:000001">
    <property type="entry name" value="Transcription initiation factor IIB"/>
    <property type="match status" value="1"/>
</dbReference>
<dbReference type="FunFam" id="2.20.25.10:FF:000037">
    <property type="entry name" value="Transcription initiation factor IIB"/>
    <property type="match status" value="1"/>
</dbReference>
<dbReference type="Gene3D" id="1.10.472.170">
    <property type="match status" value="1"/>
</dbReference>
<dbReference type="Gene3D" id="1.10.472.10">
    <property type="entry name" value="Cyclin-like"/>
    <property type="match status" value="1"/>
</dbReference>
<dbReference type="HAMAP" id="MF_00383">
    <property type="entry name" value="TF2B_arch"/>
    <property type="match status" value="1"/>
</dbReference>
<dbReference type="InterPro" id="IPR013763">
    <property type="entry name" value="Cyclin-like_dom"/>
</dbReference>
<dbReference type="InterPro" id="IPR036915">
    <property type="entry name" value="Cyclin-like_sf"/>
</dbReference>
<dbReference type="InterPro" id="IPR000812">
    <property type="entry name" value="TFIIB"/>
</dbReference>
<dbReference type="InterPro" id="IPR023484">
    <property type="entry name" value="TFIIB_arc"/>
</dbReference>
<dbReference type="InterPro" id="IPR023486">
    <property type="entry name" value="TFIIB_CS"/>
</dbReference>
<dbReference type="InterPro" id="IPR013150">
    <property type="entry name" value="TFIIB_cyclin"/>
</dbReference>
<dbReference type="InterPro" id="IPR013137">
    <property type="entry name" value="Znf_TFIIB"/>
</dbReference>
<dbReference type="NCBIfam" id="NF001658">
    <property type="entry name" value="PRK00423.1"/>
    <property type="match status" value="1"/>
</dbReference>
<dbReference type="PANTHER" id="PTHR11618:SF13">
    <property type="entry name" value="TRANSCRIPTION INITIATION FACTOR IIB"/>
    <property type="match status" value="1"/>
</dbReference>
<dbReference type="PANTHER" id="PTHR11618">
    <property type="entry name" value="TRANSCRIPTION INITIATION FACTOR IIB-RELATED"/>
    <property type="match status" value="1"/>
</dbReference>
<dbReference type="Pfam" id="PF00382">
    <property type="entry name" value="TFIIB"/>
    <property type="match status" value="2"/>
</dbReference>
<dbReference type="Pfam" id="PF08271">
    <property type="entry name" value="Zn_Ribbon_TF"/>
    <property type="match status" value="1"/>
</dbReference>
<dbReference type="PRINTS" id="PR00685">
    <property type="entry name" value="TIFACTORIIB"/>
</dbReference>
<dbReference type="SMART" id="SM00385">
    <property type="entry name" value="CYCLIN"/>
    <property type="match status" value="2"/>
</dbReference>
<dbReference type="SUPFAM" id="SSF47954">
    <property type="entry name" value="Cyclin-like"/>
    <property type="match status" value="2"/>
</dbReference>
<dbReference type="SUPFAM" id="SSF57783">
    <property type="entry name" value="Zinc beta-ribbon"/>
    <property type="match status" value="1"/>
</dbReference>
<dbReference type="PROSITE" id="PS00782">
    <property type="entry name" value="TFIIB"/>
    <property type="match status" value="1"/>
</dbReference>
<dbReference type="PROSITE" id="PS51134">
    <property type="entry name" value="ZF_TFIIB"/>
    <property type="match status" value="1"/>
</dbReference>
<organism>
    <name type="scientific">Methanococcus maripaludis (strain C5 / ATCC BAA-1333)</name>
    <dbReference type="NCBI Taxonomy" id="402880"/>
    <lineage>
        <taxon>Archaea</taxon>
        <taxon>Methanobacteriati</taxon>
        <taxon>Methanobacteriota</taxon>
        <taxon>Methanomada group</taxon>
        <taxon>Methanococci</taxon>
        <taxon>Methanococcales</taxon>
        <taxon>Methanococcaceae</taxon>
        <taxon>Methanococcus</taxon>
    </lineage>
</organism>
<sequence>MKVESVVKEETKKPERKIKLAIAKPEDYSNKNVILEKEEELICPVCGSKSIIKDYERAEIVCEMCGCVLQQNLFDVGPEWRAFDHEQRVKRSRVGAPMTYTIHDKGLSTVIDWRNKDSYGKDISADKRAQLYRLRKWQRRIRVSDASERNLAFALSELDRIASKLGLPRNVRENAAVLYRGAVEKGLIRGRSIEGVAAAALYAACRRCKVPRTLDEIAEVSRVDRKEIGRTYRFISRELNIRLAPTNPVDYVPRFASELKLPGEVESKAISILQKAGEKGLTSSRGPTGVAAAAIYIASVLQGTRRTQREVADVAGVTEVTIRNRYKELTEHLDIDVTL</sequence>
<accession>A4G0F2</accession>
<reference key="1">
    <citation type="submission" date="2007-03" db="EMBL/GenBank/DDBJ databases">
        <title>Complete sequence of chromosome of Methanococcus maripaludis C5.</title>
        <authorList>
            <consortium name="US DOE Joint Genome Institute"/>
            <person name="Copeland A."/>
            <person name="Lucas S."/>
            <person name="Lapidus A."/>
            <person name="Barry K."/>
            <person name="Glavina del Rio T."/>
            <person name="Dalin E."/>
            <person name="Tice H."/>
            <person name="Pitluck S."/>
            <person name="Chertkov O."/>
            <person name="Brettin T."/>
            <person name="Bruce D."/>
            <person name="Han C."/>
            <person name="Detter J.C."/>
            <person name="Schmutz J."/>
            <person name="Larimer F."/>
            <person name="Land M."/>
            <person name="Hauser L."/>
            <person name="Kyrpides N."/>
            <person name="Mikhailova N."/>
            <person name="Sieprawska-Lupa M."/>
            <person name="Whitman W.B."/>
            <person name="Richardson P."/>
        </authorList>
    </citation>
    <scope>NUCLEOTIDE SEQUENCE [LARGE SCALE GENOMIC DNA]</scope>
    <source>
        <strain>C5 / ATCC BAA-1333</strain>
    </source>
</reference>
<keyword id="KW-0479">Metal-binding</keyword>
<keyword id="KW-0677">Repeat</keyword>
<keyword id="KW-0804">Transcription</keyword>
<keyword id="KW-0805">Transcription regulation</keyword>
<keyword id="KW-0862">Zinc</keyword>
<keyword id="KW-0863">Zinc-finger</keyword>
<comment type="function">
    <text evidence="1">Stabilizes TBP binding to an archaeal box-A promoter. Also responsible for recruiting RNA polymerase II to the pre-initiation complex (DNA-TBP-TFIIB).</text>
</comment>
<comment type="similarity">
    <text evidence="1">Belongs to the TFIIB family.</text>
</comment>
<name>TF2B_METM5</name>
<feature type="chain" id="PRO_1000080108" description="Transcription initiation factor IIB">
    <location>
        <begin position="1"/>
        <end position="339"/>
    </location>
</feature>
<feature type="repeat" description="1">
    <location>
        <begin position="156"/>
        <end position="239"/>
    </location>
</feature>
<feature type="repeat" description="2">
    <location>
        <begin position="250"/>
        <end position="331"/>
    </location>
</feature>
<feature type="zinc finger region" description="TFIIB-type" evidence="2">
    <location>
        <begin position="39"/>
        <end position="70"/>
    </location>
</feature>
<feature type="binding site" evidence="2">
    <location>
        <position position="43"/>
    </location>
    <ligand>
        <name>Zn(2+)</name>
        <dbReference type="ChEBI" id="CHEBI:29105"/>
    </ligand>
</feature>
<feature type="binding site" evidence="2">
    <location>
        <position position="46"/>
    </location>
    <ligand>
        <name>Zn(2+)</name>
        <dbReference type="ChEBI" id="CHEBI:29105"/>
    </ligand>
</feature>
<feature type="binding site" evidence="2">
    <location>
        <position position="62"/>
    </location>
    <ligand>
        <name>Zn(2+)</name>
        <dbReference type="ChEBI" id="CHEBI:29105"/>
    </ligand>
</feature>
<feature type="binding site" evidence="2">
    <location>
        <position position="65"/>
    </location>
    <ligand>
        <name>Zn(2+)</name>
        <dbReference type="ChEBI" id="CHEBI:29105"/>
    </ligand>
</feature>
<protein>
    <recommendedName>
        <fullName evidence="1">Transcription initiation factor IIB</fullName>
        <shortName evidence="1">TFIIB</shortName>
    </recommendedName>
</protein>